<keyword id="KW-0025">Alternative splicing</keyword>
<keyword id="KW-1003">Cell membrane</keyword>
<keyword id="KW-0966">Cell projection</keyword>
<keyword id="KW-0868">Chloride</keyword>
<keyword id="KW-0869">Chloride channel</keyword>
<keyword id="KW-1015">Disulfide bond</keyword>
<keyword id="KW-0325">Glycoprotein</keyword>
<keyword id="KW-0407">Ion channel</keyword>
<keyword id="KW-0406">Ion transport</keyword>
<keyword id="KW-1071">Ligand-gated ion channel</keyword>
<keyword id="KW-0472">Membrane</keyword>
<keyword id="KW-0628">Postsynaptic cell membrane</keyword>
<keyword id="KW-0675">Receptor</keyword>
<keyword id="KW-1185">Reference proteome</keyword>
<keyword id="KW-0691">RNA editing</keyword>
<keyword id="KW-0732">Signal</keyword>
<keyword id="KW-0770">Synapse</keyword>
<keyword id="KW-0812">Transmembrane</keyword>
<keyword id="KW-1133">Transmembrane helix</keyword>
<keyword id="KW-0813">Transport</keyword>
<sequence>MSDSKMDKLARMAPLPRTPLLTIWLAINMALIAQETGHKRIHTVQAATGGGSMLGDVNISAILDSFSVSYDKRVRPNYGGPPVEVGVTMYVLSISSLSEVKMDFTLDFYFRQFWTDPRLAYRKRPGVETLSVGSEFIKNIWVPDTFFVNEKQSYFHIATTSNEFIRVHHSGSITRSIRLTITASCPMNLQYFPMDRQLCHIEIESFGYTMRDIRYKWNEGPNSVGVSSEVSLPQFKVLGHRQRAMEISLTTGNYSRLACEIQFVRSMGYYLIQIYIPSGLIVIISWVSFWLNRNATPARVALGVTTVLTMTTLMSSTNAALPKISYVKSIDVYLGTCFVMVFASLLEYATVGYMAKRIQMRKQRFMAIQKIAEQKKQQLDGANQQQANPNPNANVGGPGGVGVGPGGPGGPGGGVNVGVGMGMGPEHGHGHGHHAHSHGHPHAPKQTVSNRPIGFSNIQQNVGTRGCSIVGPLFQEVRFKVHDPKAHSKGGTLENTVNGGRGGPQSHGPGPGQGGGPPGGGGGGGGGGGPPEGGGDPEAAVPAHLLHPGKVKKDINKLLGITPSDIDKYSRIVFPVCFVCFNLMYWIIYLHVSDVVADDLVLLGEE</sequence>
<feature type="signal peptide" evidence="3">
    <location>
        <begin position="1"/>
        <end position="44"/>
    </location>
</feature>
<feature type="chain" id="PRO_0000000452" description="Gamma-aminobutyric acid receptor subunit beta">
    <location>
        <begin position="45"/>
        <end position="606"/>
    </location>
</feature>
<feature type="topological domain" description="Extracellular" evidence="3">
    <location>
        <begin position="45"/>
        <end position="268"/>
    </location>
</feature>
<feature type="transmembrane region" description="Helical" evidence="3">
    <location>
        <begin position="269"/>
        <end position="291"/>
    </location>
</feature>
<feature type="transmembrane region" description="Helical" evidence="3">
    <location>
        <begin position="297"/>
        <end position="316"/>
    </location>
</feature>
<feature type="transmembrane region" description="Helical" evidence="3">
    <location>
        <begin position="333"/>
        <end position="356"/>
    </location>
</feature>
<feature type="topological domain" description="Cytoplasmic" evidence="3">
    <location>
        <begin position="357"/>
        <end position="568"/>
    </location>
</feature>
<feature type="transmembrane region" description="Helical" evidence="3">
    <location>
        <begin position="569"/>
        <end position="590"/>
    </location>
</feature>
<feature type="region of interest" description="Disordered" evidence="4">
    <location>
        <begin position="376"/>
        <end position="451"/>
    </location>
</feature>
<feature type="region of interest" description="Disordered" evidence="4">
    <location>
        <begin position="482"/>
        <end position="542"/>
    </location>
</feature>
<feature type="compositionally biased region" description="Low complexity" evidence="4">
    <location>
        <begin position="381"/>
        <end position="395"/>
    </location>
</feature>
<feature type="compositionally biased region" description="Gly residues" evidence="4">
    <location>
        <begin position="396"/>
        <end position="425"/>
    </location>
</feature>
<feature type="compositionally biased region" description="Basic residues" evidence="4">
    <location>
        <begin position="430"/>
        <end position="443"/>
    </location>
</feature>
<feature type="compositionally biased region" description="Gly residues" evidence="4">
    <location>
        <begin position="499"/>
        <end position="536"/>
    </location>
</feature>
<feature type="glycosylation site" description="N-linked (GlcNAc...) asparagine" evidence="3">
    <location>
        <position position="58"/>
    </location>
</feature>
<feature type="glycosylation site" description="N-linked (GlcNAc...) asparagine" evidence="3">
    <location>
        <position position="253"/>
    </location>
</feature>
<feature type="disulfide bond" evidence="1">
    <location>
        <begin position="185"/>
        <end position="199"/>
    </location>
</feature>
<feature type="splice variant" id="VSP_054455" description="In isoform C." evidence="26">
    <original>LSEVK</original>
    <variation>VSEVL</variation>
    <location>
        <begin position="97"/>
        <end position="101"/>
    </location>
</feature>
<feature type="splice variant" id="VSP_054456" description="In isoform C and isoform D." evidence="25 26">
    <original>KWNEGPNSVGVSSEVSLPQFKVLGHRQRAMEIS</original>
    <variation>FWRDGLSSVGMSSEVELPQFRVLGHRQRATEIN</variation>
    <location>
        <begin position="216"/>
        <end position="248"/>
    </location>
</feature>
<feature type="splice variant" id="VSP_054457" description="In isoform D." evidence="25">
    <location>
        <begin position="448"/>
        <end position="476"/>
    </location>
</feature>
<feature type="splice variant" id="VSP_054458" description="In isoform D." evidence="25">
    <original>K</original>
    <variation>KKV</variation>
    <location>
        <position position="552"/>
    </location>
</feature>
<feature type="sequence variant" description="In RNA edited version." evidence="22 23">
    <original>R</original>
    <variation>G</variation>
    <location>
        <position position="122"/>
    </location>
</feature>
<feature type="sequence variant" description="In RNA edited version; does not alter GABA receptor activity; retains inhibition by picrotoxin; shows resistance to picrotoxinin; when associated with S-301." evidence="5 8 16 22 23">
    <original>I</original>
    <variation>V</variation>
    <location>
        <position position="283"/>
    </location>
</feature>
<feature type="sequence variant" description="In RNA edited version." evidence="23">
    <original>N</original>
    <variation>D</variation>
    <location>
        <position position="294"/>
    </location>
</feature>
<feature type="sequence variant" description="In RNA edited version." evidence="22 23">
    <original>M</original>
    <variation>V</variation>
    <location>
        <position position="360"/>
    </location>
</feature>
<feature type="mutagenesis site" description="Reduces in-current for inward flow of chloride ions, results in slower and incomplete desensitization which ultimately increases single channel open durations. Resistant to picrotoxinin (PTX) and cyclodiene dieldrin insecticides. Retains partial sensitivity to TBPS and lindane. Decreases sleep latency, increases total sleep time and shows resistance to carbamazepine sleep-induced effects on sleep both by itself or when associated with I-360. Restores defective sleep in Nlg4 and Lztr1 mutants. Retains resistance to picrotoxinin; when associated with V-283." evidence="10 14 16 20 21 23">
    <original>A</original>
    <variation>S</variation>
    <location>
        <position position="301"/>
    </location>
</feature>
<feature type="mutagenesis site" description="Decreases sleep latency; when associated with S-301." evidence="10">
    <original>M</original>
    <variation>I</variation>
    <location>
        <position position="360"/>
    </location>
</feature>
<feature type="sequence conflict" description="In Ref. 2; AAA19249." evidence="28" ref="2">
    <original>H</original>
    <variation>N</variation>
    <location>
        <position position="38"/>
    </location>
</feature>
<feature type="sequence conflict" description="In Ref. 2; AAA19249." evidence="28" ref="2">
    <original>V</original>
    <variation>I</variation>
    <location>
        <position position="68"/>
    </location>
</feature>
<feature type="sequence conflict" description="In Ref. 2; AAA19249." evidence="28" ref="2">
    <original>G</original>
    <variation>R</variation>
    <location>
        <position position="428"/>
    </location>
</feature>
<protein>
    <recommendedName>
        <fullName>Gamma-aminobutyric acid receptor subunit beta</fullName>
    </recommendedName>
    <alternativeName>
        <fullName>GABA(A) receptor subunit beta</fullName>
    </alternativeName>
    <alternativeName>
        <fullName>Protein cyclodiene resistance</fullName>
    </alternativeName>
</protein>
<organism>
    <name type="scientific">Drosophila melanogaster</name>
    <name type="common">Fruit fly</name>
    <dbReference type="NCBI Taxonomy" id="7227"/>
    <lineage>
        <taxon>Eukaryota</taxon>
        <taxon>Metazoa</taxon>
        <taxon>Ecdysozoa</taxon>
        <taxon>Arthropoda</taxon>
        <taxon>Hexapoda</taxon>
        <taxon>Insecta</taxon>
        <taxon>Pterygota</taxon>
        <taxon>Neoptera</taxon>
        <taxon>Endopterygota</taxon>
        <taxon>Diptera</taxon>
        <taxon>Brachycera</taxon>
        <taxon>Muscomorpha</taxon>
        <taxon>Ephydroidea</taxon>
        <taxon>Drosophilidae</taxon>
        <taxon>Drosophila</taxon>
        <taxon>Sophophora</taxon>
    </lineage>
</organism>
<gene>
    <name type="primary">Rdl</name>
    <name type="ORF">CG10537</name>
</gene>
<comment type="function">
    <text evidence="6 9 10 11 12 13 14 15 16 17 18 19 21 22 23 24">Gamma-aminobutyric acid (GABA) receptor voltage channel subunit (PubMed:12805302, PubMed:24823815, PubMed:7527461, PubMed:8016117, PubMed:8389005, PubMed:8882620). GABA, an inhibitory neurotransmitter, mediates neuronal inhibition by binding to the GABA receptor and opening an integral chloride channel (PubMed:12805302, PubMed:7527461, PubMed:8389005). Together with glutamate receptor GluClalpha, plays an important role in the visual response by regulating the activity of ON/OFF-selective neurons (PubMed:31535971, PubMed:32075756). Plays a role in promoting sleep and sleep latency by regulating the activity of peptidergic PDF neurons (PubMed:18223647, PubMed:19038223, PubMed:19230663). In large ventral lateral clock neurons, clustering is mediated by Nlg4 and protein levels undergo daily degradation in response to the circadian clock (PubMed:24068821, PubMed:29174887). In neurons in the mushroom bodies, has a role in odor memory acquisition where it inhibits appetitive and aversive olfactory learning, probably upstream of Adcy1/adenylate cyclase 1 and GTPase activating protein Nf1 (PubMed:18093529, PubMed:19193904). In male-specific GABAergic neurons, plays a role in inhibiting male aggressive behavior during courtship (PubMed:24241395).</text>
</comment>
<comment type="function">
    <molecule>Isoform D</molecule>
    <text evidence="16">Gamma-aminobutyric acid (GABA) receptor voltage channel subunit.</text>
</comment>
<comment type="activity regulation">
    <text evidence="6 16 21 22 23 24">Activated by agonist muscimol (PubMed:12805302, PubMed:24823815, PubMed:8016117, PubMed:8389005). Insensitive to zinc, glycine, glutamate, and baclofen, loreclezole, to antagonist bicuculline, glycine-receptor antagonist strychnine, and nonselective GABA and glycine antagonist RU 5135 (PubMed:12805302, PubMed:8016117, PubMed:8389005, PubMed:8882620). Insensitive to flunitrazepam, pentobarbitone or pregnane steroids such as 5alpha-pregnan-3alpha-ol-20-one (PubMed:12805302, PubMed:8016117, PubMed:8882620). Inhibited by insecticides picrotoxin (PTX), cyclodiene dieldrin, TBPS and lindane (PubMed:7527461, PubMed:8016117, PubMed:8389005). Inhibited by ivermectin, fipronil and pyrafluprole (PubMed:24823815).</text>
</comment>
<comment type="activity regulation">
    <molecule>Isoform D</molecule>
    <text evidence="16">Inhibited by insecticides picrotoxin (PTX).</text>
</comment>
<comment type="subunit">
    <text evidence="14 17 24">Forms oligomers (PubMed:8882620). Interacts with Nlg4; the interaction mediates Rdl clustering (PubMed:24068821). Interacts with Fbxl4; the interaction mediates Rdl degradation (PubMed:29174887).</text>
</comment>
<comment type="subcellular location">
    <subcellularLocation>
        <location evidence="14 17">Cell membrane</location>
        <topology evidence="3">Multi-pass membrane protein</topology>
    </subcellularLocation>
    <subcellularLocation>
        <location evidence="2">Postsynaptic cell membrane</location>
        <topology evidence="2">Multi-pass membrane protein</topology>
    </subcellularLocation>
    <subcellularLocation>
        <location evidence="9">Cell projection</location>
        <location evidence="9">Dendrite</location>
    </subcellularLocation>
    <subcellularLocation>
        <location evidence="9 14">Cell projection</location>
        <location evidence="9 14">Axon</location>
    </subcellularLocation>
    <text evidence="14">Localizes to large ventral lateral clock neurons axonal varicosities which are synaptic inputs to ventral lateral neuron dendrites.</text>
</comment>
<comment type="alternative products">
    <event type="alternative splicing"/>
    <isoform>
        <id>P25123-2</id>
        <name>A</name>
        <name>F</name>
        <sequence type="displayed"/>
    </isoform>
    <isoform>
        <id>P25123-1</id>
        <name>C</name>
        <sequence type="described" ref="VSP_054455 VSP_054456"/>
    </isoform>
    <isoform>
        <id>P25123-3</id>
        <name evidence="27">D</name>
        <name evidence="27">B</name>
        <sequence type="described" ref="VSP_054456 VSP_054457 VSP_054458"/>
    </isoform>
</comment>
<comment type="tissue specificity">
    <text evidence="9 11 13 14 17 18 19 20">Expressed in different parts of the brain: the mushroom bodies (alpha, alpha', beta, beta', gamma lobes and peduncles), the neurons projecting to the columnar-type neuron LC9 optic glomerulus, in interneurons connecting the paired olfactory lobes, antennal lobes, PDF-expressing small and large ventral lateral neurons (LNvs) of the circadian clock and lobula columnar neuron 11 (LC11) (at protein level) (PubMed:18093529, PubMed:19038223, PubMed:19230663, PubMed:24068821, PubMed:29174887, PubMed:32075756, PubMed:32339168). Expressed in all major ON pathway medulla neurons (Mi1, Tm3, Mi4, and Mi9) and in OFF pathway neurons (Tm1, Tm2, Tm4, and Tm9) (PubMed:31535971).</text>
</comment>
<comment type="induction">
    <text evidence="17">In large ventral lateral neurons (lLNvs), undergoes daily rhythmic degradation which is inversely correlated with the activity of lLNvs, which is involved in the circadian clock (PubMed:29174887). Degradation levels are increased in the early hours of the morning and mediated by the E3 ubiquitin ligase Fbxl4 (PubMed:29174887).</text>
</comment>
<comment type="RNA editing">
    <location>
        <position position="122" evidence="7 22"/>
    </location>
    <location>
        <position position="283" evidence="5 7 8 22"/>
    </location>
    <location>
        <position position="294" evidence="7"/>
    </location>
    <location>
        <position position="360" evidence="7 22"/>
    </location>
    <text>Partially edited.</text>
</comment>
<comment type="disruption phenotype">
    <text evidence="9 12 13 15 17 19">In lobula columnar neurons 11 (LC11) results in a reduction of visual responses to the motion of small objects (PubMed:32075756). RNAi-mediated knockdown in neurons leads to dis-inhibition of male aggressive behavior (PubMed:24241395). RNAi-mediated knockdown in neurons in the alpha/beta mushroom bodies enhances learning (PubMed:18093529). RNAi-mediated knockdown in mushroom bodies enhances appetitive olfactory learning (PubMed:19193904). RNAi-mediated knockdown in PDF-expressing neurons results in decreased sleep but does not alter waking activity, circadian period, or rhythmicity under dark-dark conditions (PubMed:19230663). Simultaneous knockout of Adcy1/adenylate cyclase 1 does not enhance the phenotype (PubMed:19193904). Simultaneous knockout of E3 ligase Fbxl4 results in significantly increased duration of daytime sleep and nighttime sleep as well as shortened sleep onset latency (PubMed:29174887).</text>
</comment>
<comment type="miscellaneous">
    <text>Resistance is thought to be due to insensitivity of the cyclodiene/picrotoxinin binding site on the GABA(A) receptor-chloride ionophore complex.</text>
</comment>
<comment type="similarity">
    <text evidence="28">Belongs to the ligand-gated ion channel (TC 1.A.9) family. Gamma-aminobutyric acid receptor (TC 1.A.9.5) subfamily.</text>
</comment>
<comment type="sequence caution" evidence="28">
    <conflict type="erroneous initiation">
        <sequence resource="EMBL-CDS" id="AAA28557"/>
    </conflict>
    <text>Truncated N-terminus.</text>
</comment>
<comment type="sequence caution" evidence="28">
    <conflict type="erroneous initiation">
        <sequence resource="EMBL-CDS" id="AAA28558"/>
    </conflict>
    <text>Truncated N-terminus.</text>
</comment>
<comment type="sequence caution" evidence="28">
    <conflict type="frameshift">
        <sequence resource="EMBL-CDS" id="AAK92842"/>
    </conflict>
</comment>
<evidence type="ECO:0000250" key="1"/>
<evidence type="ECO:0000250" key="2">
    <source>
        <dbReference type="UniProtKB" id="P15431"/>
    </source>
</evidence>
<evidence type="ECO:0000255" key="3"/>
<evidence type="ECO:0000256" key="4">
    <source>
        <dbReference type="SAM" id="MobiDB-lite"/>
    </source>
</evidence>
<evidence type="ECO:0000269" key="5">
    <source>
    </source>
</evidence>
<evidence type="ECO:0000269" key="6">
    <source>
    </source>
</evidence>
<evidence type="ECO:0000269" key="7">
    <source>
    </source>
</evidence>
<evidence type="ECO:0000269" key="8">
    <source>
    </source>
</evidence>
<evidence type="ECO:0000269" key="9">
    <source>
    </source>
</evidence>
<evidence type="ECO:0000269" key="10">
    <source>
    </source>
</evidence>
<evidence type="ECO:0000269" key="11">
    <source>
    </source>
</evidence>
<evidence type="ECO:0000269" key="12">
    <source>
    </source>
</evidence>
<evidence type="ECO:0000269" key="13">
    <source>
    </source>
</evidence>
<evidence type="ECO:0000269" key="14">
    <source>
    </source>
</evidence>
<evidence type="ECO:0000269" key="15">
    <source>
    </source>
</evidence>
<evidence type="ECO:0000269" key="16">
    <source>
    </source>
</evidence>
<evidence type="ECO:0000269" key="17">
    <source>
    </source>
</evidence>
<evidence type="ECO:0000269" key="18">
    <source>
    </source>
</evidence>
<evidence type="ECO:0000269" key="19">
    <source>
    </source>
</evidence>
<evidence type="ECO:0000269" key="20">
    <source>
    </source>
</evidence>
<evidence type="ECO:0000269" key="21">
    <source>
    </source>
</evidence>
<evidence type="ECO:0000269" key="22">
    <source>
    </source>
</evidence>
<evidence type="ECO:0000269" key="23">
    <source>
    </source>
</evidence>
<evidence type="ECO:0000269" key="24">
    <source>
    </source>
</evidence>
<evidence type="ECO:0000303" key="25">
    <source>
    </source>
</evidence>
<evidence type="ECO:0000303" key="26">
    <source>
    </source>
</evidence>
<evidence type="ECO:0000303" key="27">
    <source>
    </source>
</evidence>
<evidence type="ECO:0000305" key="28"/>
<accession>P25123</accession>
<accession>P92138</accession>
<accession>Q24561</accession>
<accession>Q26302</accession>
<accession>Q7JPX8</accession>
<accession>Q8IQB5</accession>
<accession>Q8IQB6</accession>
<accession>Q961R4</accession>
<accession>Q9TX51</accession>
<accession>Q9VSV0</accession>
<proteinExistence type="evidence at protein level"/>
<dbReference type="EMBL" id="M69057">
    <property type="protein sequence ID" value="AAA28556.1"/>
    <property type="molecule type" value="mRNA"/>
</dbReference>
<dbReference type="EMBL" id="M69057">
    <property type="protein sequence ID" value="AAA28557.1"/>
    <property type="status" value="ALT_INIT"/>
    <property type="molecule type" value="mRNA"/>
</dbReference>
<dbReference type="EMBL" id="M69057">
    <property type="protein sequence ID" value="AAA28558.1"/>
    <property type="status" value="ALT_INIT"/>
    <property type="molecule type" value="mRNA"/>
</dbReference>
<dbReference type="EMBL" id="U02042">
    <property type="protein sequence ID" value="AAA19249.1"/>
    <property type="molecule type" value="mRNA"/>
</dbReference>
<dbReference type="EMBL" id="AE014296">
    <property type="protein sequence ID" value="AAF50311.1"/>
    <property type="molecule type" value="Genomic_DNA"/>
</dbReference>
<dbReference type="EMBL" id="AE014296">
    <property type="protein sequence ID" value="AAN11988.1"/>
    <property type="molecule type" value="Genomic_DNA"/>
</dbReference>
<dbReference type="EMBL" id="AE014296">
    <property type="protein sequence ID" value="AAN11989.2"/>
    <property type="molecule type" value="Genomic_DNA"/>
</dbReference>
<dbReference type="EMBL" id="AY051418">
    <property type="protein sequence ID" value="AAK92842.1"/>
    <property type="status" value="ALT_FRAME"/>
    <property type="molecule type" value="mRNA"/>
</dbReference>
<dbReference type="EMBL" id="S61113">
    <property type="protein sequence ID" value="AAB26669.1"/>
    <property type="molecule type" value="mRNA"/>
</dbReference>
<dbReference type="PIR" id="A41145">
    <property type="entry name" value="A41145"/>
</dbReference>
<dbReference type="RefSeq" id="NP_001261616.1">
    <molecule id="P25123-2"/>
    <property type="nucleotide sequence ID" value="NM_001274687.1"/>
</dbReference>
<dbReference type="RefSeq" id="NP_523991.2">
    <molecule id="P25123-2"/>
    <property type="nucleotide sequence ID" value="NM_079267.4"/>
</dbReference>
<dbReference type="RefSeq" id="NP_729461.1">
    <molecule id="P25123-1"/>
    <property type="nucleotide sequence ID" value="NM_168321.3"/>
</dbReference>
<dbReference type="RefSeq" id="NP_729462.2">
    <molecule id="P25123-3"/>
    <property type="nucleotide sequence ID" value="NM_168322.3"/>
</dbReference>
<dbReference type="SMR" id="P25123"/>
<dbReference type="BioGRID" id="64454">
    <property type="interactions" value="7"/>
</dbReference>
<dbReference type="FunCoup" id="P25123">
    <property type="interactions" value="266"/>
</dbReference>
<dbReference type="STRING" id="7227.FBpp0305970"/>
<dbReference type="TCDB" id="1.A.9.5.11">
    <property type="family name" value="the neurotransmitter receptor, cys loop, ligand-gated ion channel (lic) family"/>
</dbReference>
<dbReference type="TCDB" id="1.A.9.5.6">
    <property type="family name" value="the neurotransmitter receptor, cys loop, ligand-gated ion channel (lic) family"/>
</dbReference>
<dbReference type="GlyCosmos" id="P25123">
    <property type="glycosylation" value="2 sites, No reported glycans"/>
</dbReference>
<dbReference type="GlyGen" id="P25123">
    <property type="glycosylation" value="2 sites"/>
</dbReference>
<dbReference type="PaxDb" id="7227-FBpp0305970"/>
<dbReference type="EnsemblMetazoa" id="FBtr0076534">
    <molecule id="P25123-2"/>
    <property type="protein sequence ID" value="FBpp0076261"/>
    <property type="gene ID" value="FBgn0004244"/>
</dbReference>
<dbReference type="EnsemblMetazoa" id="FBtr0076536">
    <molecule id="P25123-1"/>
    <property type="protein sequence ID" value="FBpp0076263"/>
    <property type="gene ID" value="FBgn0004244"/>
</dbReference>
<dbReference type="EnsemblMetazoa" id="FBtr0309054">
    <molecule id="P25123-3"/>
    <property type="protein sequence ID" value="FBpp0301075"/>
    <property type="gene ID" value="FBgn0004244"/>
</dbReference>
<dbReference type="EnsemblMetazoa" id="FBtr0333835">
    <molecule id="P25123-2"/>
    <property type="protein sequence ID" value="FBpp0305969"/>
    <property type="gene ID" value="FBgn0004244"/>
</dbReference>
<dbReference type="GeneID" id="39054"/>
<dbReference type="KEGG" id="dme:Dmel_CG10537"/>
<dbReference type="AGR" id="FB:FBgn0004244"/>
<dbReference type="CTD" id="39054"/>
<dbReference type="FlyBase" id="FBgn0004244">
    <property type="gene designation" value="Rdl"/>
</dbReference>
<dbReference type="VEuPathDB" id="VectorBase:FBgn0004244"/>
<dbReference type="eggNOG" id="KOG3643">
    <property type="taxonomic scope" value="Eukaryota"/>
</dbReference>
<dbReference type="GeneTree" id="ENSGT00940000169322"/>
<dbReference type="InParanoid" id="P25123"/>
<dbReference type="OrthoDB" id="8890589at2759"/>
<dbReference type="Reactome" id="R-DME-977443">
    <property type="pathway name" value="GABA receptor activation"/>
</dbReference>
<dbReference type="BioGRID-ORCS" id="39054">
    <property type="hits" value="0 hits in 3 CRISPR screens"/>
</dbReference>
<dbReference type="GenomeRNAi" id="39054"/>
<dbReference type="PRO" id="PR:P25123"/>
<dbReference type="Proteomes" id="UP000000803">
    <property type="component" value="Chromosome 3L"/>
</dbReference>
<dbReference type="Bgee" id="FBgn0004244">
    <property type="expression patterns" value="Expressed in transmedullary neuron Tm1 (Drosophila) in insect head and 205 other cell types or tissues"/>
</dbReference>
<dbReference type="ExpressionAtlas" id="P25123">
    <property type="expression patterns" value="baseline and differential"/>
</dbReference>
<dbReference type="GO" id="GO:0030424">
    <property type="term" value="C:axon"/>
    <property type="evidence" value="ECO:0000314"/>
    <property type="project" value="FlyBase"/>
</dbReference>
<dbReference type="GO" id="GO:0034707">
    <property type="term" value="C:chloride channel complex"/>
    <property type="evidence" value="ECO:0007669"/>
    <property type="project" value="UniProtKB-KW"/>
</dbReference>
<dbReference type="GO" id="GO:0030425">
    <property type="term" value="C:dendrite"/>
    <property type="evidence" value="ECO:0000314"/>
    <property type="project" value="FlyBase"/>
</dbReference>
<dbReference type="GO" id="GO:1902711">
    <property type="term" value="C:GABA-A receptor complex"/>
    <property type="evidence" value="ECO:0000318"/>
    <property type="project" value="GO_Central"/>
</dbReference>
<dbReference type="GO" id="GO:0016020">
    <property type="term" value="C:membrane"/>
    <property type="evidence" value="ECO:0000303"/>
    <property type="project" value="UniProtKB"/>
</dbReference>
<dbReference type="GO" id="GO:0032589">
    <property type="term" value="C:neuron projection membrane"/>
    <property type="evidence" value="ECO:0000314"/>
    <property type="project" value="FlyBase"/>
</dbReference>
<dbReference type="GO" id="GO:0032809">
    <property type="term" value="C:neuronal cell body membrane"/>
    <property type="evidence" value="ECO:0000314"/>
    <property type="project" value="FlyBase"/>
</dbReference>
<dbReference type="GO" id="GO:0005886">
    <property type="term" value="C:plasma membrane"/>
    <property type="evidence" value="ECO:0000250"/>
    <property type="project" value="FlyBase"/>
</dbReference>
<dbReference type="GO" id="GO:0045211">
    <property type="term" value="C:postsynaptic membrane"/>
    <property type="evidence" value="ECO:0007669"/>
    <property type="project" value="UniProtKB-SubCell"/>
</dbReference>
<dbReference type="GO" id="GO:0004890">
    <property type="term" value="F:GABA-A receptor activity"/>
    <property type="evidence" value="ECO:0000318"/>
    <property type="project" value="GO_Central"/>
</dbReference>
<dbReference type="GO" id="GO:0022851">
    <property type="term" value="F:GABA-gated chloride ion channel activity"/>
    <property type="evidence" value="ECO:0000314"/>
    <property type="project" value="FlyBase"/>
</dbReference>
<dbReference type="GO" id="GO:0030594">
    <property type="term" value="F:neurotransmitter receptor activity"/>
    <property type="evidence" value="ECO:0000314"/>
    <property type="project" value="UniProtKB"/>
</dbReference>
<dbReference type="GO" id="GO:1902476">
    <property type="term" value="P:chloride transmembrane transport"/>
    <property type="evidence" value="ECO:0000318"/>
    <property type="project" value="GO_Central"/>
</dbReference>
<dbReference type="GO" id="GO:0002121">
    <property type="term" value="P:inter-male aggressive behavior"/>
    <property type="evidence" value="ECO:0000315"/>
    <property type="project" value="FlyBase"/>
</dbReference>
<dbReference type="GO" id="GO:0006811">
    <property type="term" value="P:monoatomic ion transport"/>
    <property type="evidence" value="ECO:0000314"/>
    <property type="project" value="UniProtKB"/>
</dbReference>
<dbReference type="GO" id="GO:0050805">
    <property type="term" value="P:negative regulation of synaptic transmission"/>
    <property type="evidence" value="ECO:0000315"/>
    <property type="project" value="FlyBase"/>
</dbReference>
<dbReference type="GO" id="GO:0042048">
    <property type="term" value="P:olfactory behavior"/>
    <property type="evidence" value="ECO:0000315"/>
    <property type="project" value="FlyBase"/>
</dbReference>
<dbReference type="GO" id="GO:0042749">
    <property type="term" value="P:regulation of circadian sleep/wake cycle"/>
    <property type="evidence" value="ECO:0000315"/>
    <property type="project" value="FlyBase"/>
</dbReference>
<dbReference type="GO" id="GO:0090328">
    <property type="term" value="P:regulation of olfactory learning"/>
    <property type="evidence" value="ECO:0000315"/>
    <property type="project" value="FlyBase"/>
</dbReference>
<dbReference type="GO" id="GO:0009612">
    <property type="term" value="P:response to mechanical stimulus"/>
    <property type="evidence" value="ECO:0000316"/>
    <property type="project" value="FlyBase"/>
</dbReference>
<dbReference type="GO" id="GO:0009410">
    <property type="term" value="P:response to xenobiotic stimulus"/>
    <property type="evidence" value="ECO:0000315"/>
    <property type="project" value="FlyBase"/>
</dbReference>
<dbReference type="GO" id="GO:0030431">
    <property type="term" value="P:sleep"/>
    <property type="evidence" value="ECO:0000315"/>
    <property type="project" value="FlyBase"/>
</dbReference>
<dbReference type="CDD" id="cd19008">
    <property type="entry name" value="LGIC_ECD_GABAR_RDL-like"/>
    <property type="match status" value="1"/>
</dbReference>
<dbReference type="CDD" id="cd19049">
    <property type="entry name" value="LGIC_TM_anion"/>
    <property type="match status" value="1"/>
</dbReference>
<dbReference type="FunFam" id="2.70.170.10:FF:000021">
    <property type="entry name" value="Gamma-aminobutyric acid receptor isoform 3b"/>
    <property type="match status" value="1"/>
</dbReference>
<dbReference type="FunFam" id="1.20.58.390:FF:000057">
    <property type="entry name" value="Resistance to dieldrin, isoform E"/>
    <property type="match status" value="1"/>
</dbReference>
<dbReference type="FunFam" id="1.20.58.390:FF:000047">
    <property type="entry name" value="Resistance to dieldrin, isoform H"/>
    <property type="match status" value="1"/>
</dbReference>
<dbReference type="Gene3D" id="2.70.170.10">
    <property type="entry name" value="Neurotransmitter-gated ion-channel ligand-binding domain"/>
    <property type="match status" value="1"/>
</dbReference>
<dbReference type="Gene3D" id="1.20.58.390">
    <property type="entry name" value="Neurotransmitter-gated ion-channel transmembrane domain"/>
    <property type="match status" value="2"/>
</dbReference>
<dbReference type="InterPro" id="IPR006028">
    <property type="entry name" value="GABAA/Glycine_rcpt"/>
</dbReference>
<dbReference type="InterPro" id="IPR002289">
    <property type="entry name" value="GABAAb_rcpt"/>
</dbReference>
<dbReference type="InterPro" id="IPR006202">
    <property type="entry name" value="Neur_chan_lig-bd"/>
</dbReference>
<dbReference type="InterPro" id="IPR036734">
    <property type="entry name" value="Neur_chan_lig-bd_sf"/>
</dbReference>
<dbReference type="InterPro" id="IPR006201">
    <property type="entry name" value="Neur_channel"/>
</dbReference>
<dbReference type="InterPro" id="IPR036719">
    <property type="entry name" value="Neuro-gated_channel_TM_sf"/>
</dbReference>
<dbReference type="InterPro" id="IPR038050">
    <property type="entry name" value="Neuro_actylchol_rec"/>
</dbReference>
<dbReference type="InterPro" id="IPR006029">
    <property type="entry name" value="Neurotrans-gated_channel_TM"/>
</dbReference>
<dbReference type="InterPro" id="IPR018000">
    <property type="entry name" value="Neurotransmitter_ion_chnl_CS"/>
</dbReference>
<dbReference type="NCBIfam" id="TIGR00860">
    <property type="entry name" value="LIC"/>
    <property type="match status" value="1"/>
</dbReference>
<dbReference type="PANTHER" id="PTHR18945">
    <property type="entry name" value="NEUROTRANSMITTER GATED ION CHANNEL"/>
    <property type="match status" value="1"/>
</dbReference>
<dbReference type="Pfam" id="PF02931">
    <property type="entry name" value="Neur_chan_LBD"/>
    <property type="match status" value="1"/>
</dbReference>
<dbReference type="Pfam" id="PF02932">
    <property type="entry name" value="Neur_chan_memb"/>
    <property type="match status" value="1"/>
</dbReference>
<dbReference type="PRINTS" id="PR01160">
    <property type="entry name" value="GABAARBETA"/>
</dbReference>
<dbReference type="PRINTS" id="PR00253">
    <property type="entry name" value="GABAARECEPTR"/>
</dbReference>
<dbReference type="PRINTS" id="PR00252">
    <property type="entry name" value="NRIONCHANNEL"/>
</dbReference>
<dbReference type="SUPFAM" id="SSF90112">
    <property type="entry name" value="Neurotransmitter-gated ion-channel transmembrane pore"/>
    <property type="match status" value="1"/>
</dbReference>
<dbReference type="SUPFAM" id="SSF63712">
    <property type="entry name" value="Nicotinic receptor ligand binding domain-like"/>
    <property type="match status" value="1"/>
</dbReference>
<dbReference type="PROSITE" id="PS00236">
    <property type="entry name" value="NEUROTR_ION_CHANNEL"/>
    <property type="match status" value="1"/>
</dbReference>
<name>GBRB_DROME</name>
<reference key="1">
    <citation type="journal article" date="1991" name="Proc. Natl. Acad. Sci. U.S.A.">
        <title>Molecular cloning and transformation of cyclodiene resistance in Drosophila: an invertebrate gamma-aminobutyric acid subtype A receptor locus.</title>
        <authorList>
            <person name="ffrench-Constant R.H."/>
            <person name="Mortlock D.P."/>
            <person name="Shaffer C.D."/>
            <person name="Macintyre R.J."/>
            <person name="Roush R.T."/>
        </authorList>
    </citation>
    <scope>NUCLEOTIDE SEQUENCE [MRNA] (ISOFORM C)</scope>
    <scope>RNA EDITING OF POSITION 283</scope>
    <source>
        <tissue>Embryo</tissue>
    </source>
</reference>
<reference key="2">
    <citation type="journal article" date="1994" name="Proc. Natl. Acad. Sci. U.S.A.">
        <title>Cloning and functional expression of a Drosophila gamma-aminobutyric acid receptor.</title>
        <authorList>
            <person name="Chen R."/>
            <person name="Belelli D."/>
            <person name="Reyes A."/>
            <person name="Lambert J.J."/>
            <person name="Peters J.A."/>
            <person name="Lan N.C."/>
        </authorList>
    </citation>
    <scope>NUCLEOTIDE SEQUENCE [MRNA] (ISOFORM A)</scope>
    <scope>FUNCTION</scope>
    <scope>ACTIVITY REGULATION</scope>
    <scope>RNA EDITING OF POSITIONS 122; 283 AND 360</scope>
    <source>
        <tissue>Head</tissue>
    </source>
</reference>
<reference key="3">
    <citation type="journal article" date="2000" name="Science">
        <title>The genome sequence of Drosophila melanogaster.</title>
        <authorList>
            <person name="Adams M.D."/>
            <person name="Celniker S.E."/>
            <person name="Holt R.A."/>
            <person name="Evans C.A."/>
            <person name="Gocayne J.D."/>
            <person name="Amanatides P.G."/>
            <person name="Scherer S.E."/>
            <person name="Li P.W."/>
            <person name="Hoskins R.A."/>
            <person name="Galle R.F."/>
            <person name="George R.A."/>
            <person name="Lewis S.E."/>
            <person name="Richards S."/>
            <person name="Ashburner M."/>
            <person name="Henderson S.N."/>
            <person name="Sutton G.G."/>
            <person name="Wortman J.R."/>
            <person name="Yandell M.D."/>
            <person name="Zhang Q."/>
            <person name="Chen L.X."/>
            <person name="Brandon R.C."/>
            <person name="Rogers Y.-H.C."/>
            <person name="Blazej R.G."/>
            <person name="Champe M."/>
            <person name="Pfeiffer B.D."/>
            <person name="Wan K.H."/>
            <person name="Doyle C."/>
            <person name="Baxter E.G."/>
            <person name="Helt G."/>
            <person name="Nelson C.R."/>
            <person name="Miklos G.L.G."/>
            <person name="Abril J.F."/>
            <person name="Agbayani A."/>
            <person name="An H.-J."/>
            <person name="Andrews-Pfannkoch C."/>
            <person name="Baldwin D."/>
            <person name="Ballew R.M."/>
            <person name="Basu A."/>
            <person name="Baxendale J."/>
            <person name="Bayraktaroglu L."/>
            <person name="Beasley E.M."/>
            <person name="Beeson K.Y."/>
            <person name="Benos P.V."/>
            <person name="Berman B.P."/>
            <person name="Bhandari D."/>
            <person name="Bolshakov S."/>
            <person name="Borkova D."/>
            <person name="Botchan M.R."/>
            <person name="Bouck J."/>
            <person name="Brokstein P."/>
            <person name="Brottier P."/>
            <person name="Burtis K.C."/>
            <person name="Busam D.A."/>
            <person name="Butler H."/>
            <person name="Cadieu E."/>
            <person name="Center A."/>
            <person name="Chandra I."/>
            <person name="Cherry J.M."/>
            <person name="Cawley S."/>
            <person name="Dahlke C."/>
            <person name="Davenport L.B."/>
            <person name="Davies P."/>
            <person name="de Pablos B."/>
            <person name="Delcher A."/>
            <person name="Deng Z."/>
            <person name="Mays A.D."/>
            <person name="Dew I."/>
            <person name="Dietz S.M."/>
            <person name="Dodson K."/>
            <person name="Doup L.E."/>
            <person name="Downes M."/>
            <person name="Dugan-Rocha S."/>
            <person name="Dunkov B.C."/>
            <person name="Dunn P."/>
            <person name="Durbin K.J."/>
            <person name="Evangelista C.C."/>
            <person name="Ferraz C."/>
            <person name="Ferriera S."/>
            <person name="Fleischmann W."/>
            <person name="Fosler C."/>
            <person name="Gabrielian A.E."/>
            <person name="Garg N.S."/>
            <person name="Gelbart W.M."/>
            <person name="Glasser K."/>
            <person name="Glodek A."/>
            <person name="Gong F."/>
            <person name="Gorrell J.H."/>
            <person name="Gu Z."/>
            <person name="Guan P."/>
            <person name="Harris M."/>
            <person name="Harris N.L."/>
            <person name="Harvey D.A."/>
            <person name="Heiman T.J."/>
            <person name="Hernandez J.R."/>
            <person name="Houck J."/>
            <person name="Hostin D."/>
            <person name="Houston K.A."/>
            <person name="Howland T.J."/>
            <person name="Wei M.-H."/>
            <person name="Ibegwam C."/>
            <person name="Jalali M."/>
            <person name="Kalush F."/>
            <person name="Karpen G.H."/>
            <person name="Ke Z."/>
            <person name="Kennison J.A."/>
            <person name="Ketchum K.A."/>
            <person name="Kimmel B.E."/>
            <person name="Kodira C.D."/>
            <person name="Kraft C.L."/>
            <person name="Kravitz S."/>
            <person name="Kulp D."/>
            <person name="Lai Z."/>
            <person name="Lasko P."/>
            <person name="Lei Y."/>
            <person name="Levitsky A.A."/>
            <person name="Li J.H."/>
            <person name="Li Z."/>
            <person name="Liang Y."/>
            <person name="Lin X."/>
            <person name="Liu X."/>
            <person name="Mattei B."/>
            <person name="McIntosh T.C."/>
            <person name="McLeod M.P."/>
            <person name="McPherson D."/>
            <person name="Merkulov G."/>
            <person name="Milshina N.V."/>
            <person name="Mobarry C."/>
            <person name="Morris J."/>
            <person name="Moshrefi A."/>
            <person name="Mount S.M."/>
            <person name="Moy M."/>
            <person name="Murphy B."/>
            <person name="Murphy L."/>
            <person name="Muzny D.M."/>
            <person name="Nelson D.L."/>
            <person name="Nelson D.R."/>
            <person name="Nelson K.A."/>
            <person name="Nixon K."/>
            <person name="Nusskern D.R."/>
            <person name="Pacleb J.M."/>
            <person name="Palazzolo M."/>
            <person name="Pittman G.S."/>
            <person name="Pan S."/>
            <person name="Pollard J."/>
            <person name="Puri V."/>
            <person name="Reese M.G."/>
            <person name="Reinert K."/>
            <person name="Remington K."/>
            <person name="Saunders R.D.C."/>
            <person name="Scheeler F."/>
            <person name="Shen H."/>
            <person name="Shue B.C."/>
            <person name="Siden-Kiamos I."/>
            <person name="Simpson M."/>
            <person name="Skupski M.P."/>
            <person name="Smith T.J."/>
            <person name="Spier E."/>
            <person name="Spradling A.C."/>
            <person name="Stapleton M."/>
            <person name="Strong R."/>
            <person name="Sun E."/>
            <person name="Svirskas R."/>
            <person name="Tector C."/>
            <person name="Turner R."/>
            <person name="Venter E."/>
            <person name="Wang A.H."/>
            <person name="Wang X."/>
            <person name="Wang Z.-Y."/>
            <person name="Wassarman D.A."/>
            <person name="Weinstock G.M."/>
            <person name="Weissenbach J."/>
            <person name="Williams S.M."/>
            <person name="Woodage T."/>
            <person name="Worley K.C."/>
            <person name="Wu D."/>
            <person name="Yang S."/>
            <person name="Yao Q.A."/>
            <person name="Ye J."/>
            <person name="Yeh R.-F."/>
            <person name="Zaveri J.S."/>
            <person name="Zhan M."/>
            <person name="Zhang G."/>
            <person name="Zhao Q."/>
            <person name="Zheng L."/>
            <person name="Zheng X.H."/>
            <person name="Zhong F.N."/>
            <person name="Zhong W."/>
            <person name="Zhou X."/>
            <person name="Zhu S.C."/>
            <person name="Zhu X."/>
            <person name="Smith H.O."/>
            <person name="Gibbs R.A."/>
            <person name="Myers E.W."/>
            <person name="Rubin G.M."/>
            <person name="Venter J.C."/>
        </authorList>
    </citation>
    <scope>NUCLEOTIDE SEQUENCE [LARGE SCALE GENOMIC DNA]</scope>
    <source>
        <strain>Berkeley</strain>
    </source>
</reference>
<reference key="4">
    <citation type="journal article" date="2002" name="Genome Biol.">
        <title>Annotation of the Drosophila melanogaster euchromatic genome: a systematic review.</title>
        <authorList>
            <person name="Misra S."/>
            <person name="Crosby M.A."/>
            <person name="Mungall C.J."/>
            <person name="Matthews B.B."/>
            <person name="Campbell K.S."/>
            <person name="Hradecky P."/>
            <person name="Huang Y."/>
            <person name="Kaminker J.S."/>
            <person name="Millburn G.H."/>
            <person name="Prochnik S.E."/>
            <person name="Smith C.D."/>
            <person name="Tupy J.L."/>
            <person name="Whitfield E.J."/>
            <person name="Bayraktaroglu L."/>
            <person name="Berman B.P."/>
            <person name="Bettencourt B.R."/>
            <person name="Celniker S.E."/>
            <person name="de Grey A.D.N.J."/>
            <person name="Drysdale R.A."/>
            <person name="Harris N.L."/>
            <person name="Richter J."/>
            <person name="Russo S."/>
            <person name="Schroeder A.J."/>
            <person name="Shu S.Q."/>
            <person name="Stapleton M."/>
            <person name="Yamada C."/>
            <person name="Ashburner M."/>
            <person name="Gelbart W.M."/>
            <person name="Rubin G.M."/>
            <person name="Lewis S.E."/>
        </authorList>
    </citation>
    <scope>GENOME REANNOTATION</scope>
    <scope>ALTERNATIVE SPLICING</scope>
    <source>
        <strain>Berkeley</strain>
    </source>
</reference>
<reference key="5">
    <citation type="journal article" date="2002" name="Genome Biol.">
        <title>A Drosophila full-length cDNA resource.</title>
        <authorList>
            <person name="Stapleton M."/>
            <person name="Carlson J.W."/>
            <person name="Brokstein P."/>
            <person name="Yu C."/>
            <person name="Champe M."/>
            <person name="George R.A."/>
            <person name="Guarin H."/>
            <person name="Kronmiller B."/>
            <person name="Pacleb J.M."/>
            <person name="Park S."/>
            <person name="Wan K.H."/>
            <person name="Rubin G.M."/>
            <person name="Celniker S.E."/>
        </authorList>
    </citation>
    <scope>NUCLEOTIDE SEQUENCE [LARGE SCALE MRNA] (ISOFORM D)</scope>
    <scope>RNA EDITING OF POSITION 283</scope>
    <source>
        <strain>Berkeley</strain>
        <tissue>Head</tissue>
    </source>
</reference>
<reference key="6">
    <citation type="journal article" date="1993" name="J. Neurochem.">
        <title>Drosophila gamma-aminobutyric acid receptor gene Rdl shows extensive alternative splicing.</title>
        <authorList>
            <person name="ffrench-Constant R.H."/>
            <person name="Rocheleau T.A."/>
        </authorList>
    </citation>
    <scope>NUCLEOTIDE SEQUENCE [MRNA] OF 70-113 (ISOFORMS A/D)</scope>
</reference>
<reference key="7">
    <citation type="journal article" date="1993" name="Nature">
        <title>A point mutation in a Drosophila GABA receptor confers insecticide resistance.</title>
        <authorList>
            <person name="Ffrench-Constant R.H."/>
            <person name="Rocheleau T.A."/>
            <person name="Steichen J.C."/>
            <person name="Chalmers A.E."/>
        </authorList>
    </citation>
    <scope>FUNCTION</scope>
    <scope>ACTIVITY REGULATION</scope>
    <scope>MUTAGENESIS OF ALA-301</scope>
</reference>
<reference key="8">
    <citation type="journal article" date="1994" name="J. Physiol. (Lond.)">
        <title>A unique amino acid of the Drosophila GABA receptor with influence on drug sensitivity by two mechanisms.</title>
        <authorList>
            <person name="Zhang H.G."/>
            <person name="ffrench-Constant R.H."/>
            <person name="Jackson M.B."/>
        </authorList>
    </citation>
    <scope>FUNCTION</scope>
    <scope>ACTIVITY REGULATION</scope>
    <scope>MUTAGENESIS OF ALA-301</scope>
</reference>
<reference key="9">
    <citation type="journal article" date="1996" name="Br. J. Pharmacol.">
        <title>Allosteric modulation of an expressed homo-oligomeric GABA-gated chloride channel of Drosophila melanogaster.</title>
        <authorList>
            <person name="Hosie A.M."/>
            <person name="Sattelle D.B."/>
        </authorList>
    </citation>
    <scope>FUNCTION</scope>
    <scope>ACTIVITY REGULATION</scope>
    <scope>SUBUNIT</scope>
</reference>
<reference key="10">
    <citation type="journal article" date="2003" name="J. Neurosci.">
        <title>GABA receptors containing Rdl subunits mediate fast inhibitory synaptic transmission in Drosophila neurons.</title>
        <authorList>
            <person name="Lee D."/>
            <person name="Su H."/>
            <person name="O'Dowd D.K."/>
        </authorList>
    </citation>
    <scope>FUNCTION</scope>
    <scope>ACTIVITY REGULATION</scope>
</reference>
<reference key="11">
    <citation type="journal article" date="2003" name="Science">
        <title>Nervous system targets of RNA editing identified by comparative genomics.</title>
        <authorList>
            <person name="Hoopengardner B."/>
            <person name="Bhalla T."/>
            <person name="Staber C."/>
            <person name="Reenan R."/>
        </authorList>
    </citation>
    <scope>RNA EDITING</scope>
</reference>
<reference key="12">
    <citation type="journal article" date="2007" name="Neuron">
        <title>GABAA receptor RDL inhibits Drosophila olfactory associative learning.</title>
        <authorList>
            <person name="Liu X."/>
            <person name="Krause W.C."/>
            <person name="Davis R.L."/>
        </authorList>
    </citation>
    <scope>FUNCTION</scope>
    <scope>SUBCELLULAR LOCATION</scope>
    <scope>TISSUE SPECIFICITY</scope>
    <scope>DISRUPTION PHENOTYPE</scope>
</reference>
<reference key="13">
    <citation type="journal article" date="2008" name="Nat. Neurosci.">
        <title>Modulation of GABAA receptor desensitization uncouples sleep onset and maintenance in Drosophila.</title>
        <authorList>
            <person name="Agosto J."/>
            <person name="Choi J.C."/>
            <person name="Parisky K.M."/>
            <person name="Stilwell G."/>
            <person name="Rosbash M."/>
            <person name="Griffith L.C."/>
        </authorList>
    </citation>
    <scope>FUNCTION</scope>
    <scope>MUTAGENESIS OF ALA-301 AND MET-360</scope>
</reference>
<reference key="14">
    <citation type="journal article" date="2008" name="Neuron">
        <title>PDF cells are a GABA-responsive wake-promoting component of the Drosophila sleep circuit.</title>
        <authorList>
            <person name="Parisky K.M."/>
            <person name="Agosto J."/>
            <person name="Pulver S.R."/>
            <person name="Shang Y."/>
            <person name="Kuklin E."/>
            <person name="Hodge J.J."/>
            <person name="Kang K."/>
            <person name="Kang K."/>
            <person name="Liu X."/>
            <person name="Garrity P.A."/>
            <person name="Rosbash M."/>
            <person name="Griffith L.C."/>
        </authorList>
    </citation>
    <scope>FUNCTION</scope>
    <scope>TISSUE SPECIFICITY</scope>
</reference>
<reference key="15">
    <citation type="journal article" date="2009" name="Curr. Biol.">
        <title>The GABA(A) receptor RDL acts in peptidergic PDF neurons to promote sleep in Drosophila.</title>
        <authorList>
            <person name="Chung B.Y."/>
            <person name="Kilman V.L."/>
            <person name="Keath J.R."/>
            <person name="Pitman J.L."/>
            <person name="Allada R."/>
        </authorList>
    </citation>
    <scope>FUNCTION</scope>
    <scope>TISSUE SPECIFICITY</scope>
    <scope>DISRUPTION PHENOTYPE</scope>
</reference>
<reference key="16">
    <citation type="journal article" date="2009" name="J. Neurosci.">
        <title>The GABAA receptor RDL suppresses the conditioned stimulus pathway for olfactory learning.</title>
        <authorList>
            <person name="Liu X."/>
            <person name="Buchanan M.E."/>
            <person name="Han K.A."/>
            <person name="Davis R.L."/>
        </authorList>
    </citation>
    <scope>FUNCTION</scope>
    <scope>DISRUPTION PHENOTYPE</scope>
</reference>
<reference key="17">
    <citation type="journal article" date="2013" name="J. Neurosci.">
        <title>Drosophila neuroligin 4 regulates sleep through modulating GABA transmission.</title>
        <authorList>
            <person name="Li Y."/>
            <person name="Zhou Z."/>
            <person name="Zhang X."/>
            <person name="Tong H."/>
            <person name="Li P."/>
            <person name="Zhang Z.C."/>
            <person name="Jia Z."/>
            <person name="Xie W."/>
            <person name="Han J."/>
        </authorList>
    </citation>
    <scope>FUNCTION</scope>
    <scope>INTERACTION WITH NLG4</scope>
    <scope>SUBCELLULAR LOCATION</scope>
    <scope>TISSUE SPECIFICITY</scope>
</reference>
<reference key="18">
    <citation type="journal article" date="2014" name="Nat. Neurosci.">
        <title>Female contact modulates male aggression via a sexually dimorphic GABAergic circuit in Drosophila.</title>
        <authorList>
            <person name="Yuan Q."/>
            <person name="Song Y."/>
            <person name="Yang C.H."/>
            <person name="Jan L.Y."/>
            <person name="Jan Y.N."/>
        </authorList>
    </citation>
    <scope>FUNCTION</scope>
    <scope>DISRUPTION PHENOTYPE</scope>
</reference>
<reference key="19">
    <citation type="journal article" date="2014" name="PLoS ONE">
        <title>Actions of agonists, fipronil and ivermectin on the predominant in vivo splice and edit variant (RDLbd, I/V) of the Drosophila GABA receptor expressed in Xenopus laevis oocytes.</title>
        <authorList>
            <person name="Lees K."/>
            <person name="Musgaard M."/>
            <person name="Suwanmanee S."/>
            <person name="Buckingham S.D."/>
            <person name="Biggin P."/>
            <person name="Sattelle D."/>
        </authorList>
    </citation>
    <scope>FUNCTION (ISOFORM D)</scope>
    <scope>ACTIVITY REGULATION (ISOFORM D)</scope>
    <scope>MUTAGENESIS OF ALA-301</scope>
    <scope>CHARACTERIZATION OF VARIANT-283</scope>
</reference>
<reference key="20">
    <citation type="journal article" date="2017" name="Curr. Biol.">
        <title>Fbxl4 Serves as a Clock Output Molecule that Regulates Sleep through Promotion of Rhythmic Degradation of the GABAA Receptor.</title>
        <authorList>
            <person name="Li Q."/>
            <person name="Li Y."/>
            <person name="Wang X."/>
            <person name="Qi J."/>
            <person name="Jin X."/>
            <person name="Tong H."/>
            <person name="Zhou Z."/>
            <person name="Zhang Z.C."/>
            <person name="Han J."/>
        </authorList>
    </citation>
    <scope>FUNCTION</scope>
    <scope>INTERACTION WITH FBXL4</scope>
    <scope>SUBCELLULAR LOCATION</scope>
    <scope>TISSUE SPECIFICITY</scope>
    <scope>INDUCTION BY NEURONAL ACTIVITY</scope>
    <scope>DISRUPTION PHENOTYPE</scope>
</reference>
<reference key="21">
    <citation type="journal article" date="2019" name="Elife">
        <title>ON selectivity in the Drosophila visual system is a multisynaptic process involving both glutamatergic and GABAergic inhibition.</title>
        <authorList>
            <person name="Molina-Obando S."/>
            <person name="Vargas-Fique J.F."/>
            <person name="Henning M."/>
            <person name="Guer B."/>
            <person name="Schladt T.M."/>
            <person name="Akhtar J."/>
            <person name="Berger T.K."/>
            <person name="Silies M."/>
        </authorList>
    </citation>
    <scope>FUNCTION</scope>
    <scope>TISSUE SPECIFICITY</scope>
</reference>
<reference key="22">
    <citation type="journal article" date="2020" name="Cell Rep.">
        <title>Inhibitory Interactions and Columnar Inputs to an Object Motion Detector in Drosophila.</title>
        <authorList>
            <person name="Keles M.F."/>
            <person name="Hardcastle B.J."/>
            <person name="Staedele C."/>
            <person name="Xiao Q."/>
            <person name="Frye M.A."/>
        </authorList>
    </citation>
    <scope>FUNCTION</scope>
    <scope>TISSUE SPECIFICITY</scope>
    <scope>DISRUPTION PHENOTYPE</scope>
</reference>
<reference key="23">
    <citation type="journal article" date="2020" name="PLoS Genet.">
        <title>Analysis of genes within the schizophrenia-linked 22q11.2 deletion identifies interaction of night owl/LZTR1 and NF1 in GABAergic sleep control.</title>
        <authorList>
            <person name="Maurer G.W."/>
            <person name="Malita A."/>
            <person name="Nagy S."/>
            <person name="Koyama T."/>
            <person name="Werge T.M."/>
            <person name="Halberg K.A."/>
            <person name="Texada M.J."/>
            <person name="Rewitz K."/>
        </authorList>
    </citation>
    <scope>TISSUE SPECIFICITY</scope>
    <scope>MUTAGENESIS OF ALA-301</scope>
</reference>